<comment type="function">
    <text evidence="1">Cell wall formation. Catalyzes the transfer of a GlcNAc subunit on undecaprenyl-pyrophosphoryl-MurNAc-pentapeptide (lipid intermediate I) to form undecaprenyl-pyrophosphoryl-MurNAc-(pentapeptide)GlcNAc (lipid intermediate II).</text>
</comment>
<comment type="catalytic activity">
    <reaction evidence="1">
        <text>di-trans,octa-cis-undecaprenyl diphospho-N-acetyl-alpha-D-muramoyl-L-alanyl-D-glutamyl-meso-2,6-diaminopimeloyl-D-alanyl-D-alanine + UDP-N-acetyl-alpha-D-glucosamine = di-trans,octa-cis-undecaprenyl diphospho-[N-acetyl-alpha-D-glucosaminyl-(1-&gt;4)]-N-acetyl-alpha-D-muramoyl-L-alanyl-D-glutamyl-meso-2,6-diaminopimeloyl-D-alanyl-D-alanine + UDP + H(+)</text>
        <dbReference type="Rhea" id="RHEA:31227"/>
        <dbReference type="ChEBI" id="CHEBI:15378"/>
        <dbReference type="ChEBI" id="CHEBI:57705"/>
        <dbReference type="ChEBI" id="CHEBI:58223"/>
        <dbReference type="ChEBI" id="CHEBI:61387"/>
        <dbReference type="ChEBI" id="CHEBI:61388"/>
        <dbReference type="EC" id="2.4.1.227"/>
    </reaction>
</comment>
<comment type="pathway">
    <text evidence="1">Cell wall biogenesis; peptidoglycan biosynthesis.</text>
</comment>
<comment type="subcellular location">
    <subcellularLocation>
        <location evidence="1">Cell inner membrane</location>
        <topology evidence="1">Peripheral membrane protein</topology>
        <orientation evidence="1">Cytoplasmic side</orientation>
    </subcellularLocation>
</comment>
<comment type="similarity">
    <text evidence="1">Belongs to the glycosyltransferase 28 family. MurG subfamily.</text>
</comment>
<feature type="chain" id="PRO_1000002702" description="UDP-N-acetylglucosamine--N-acetylmuramyl-(pentapeptide) pyrophosphoryl-undecaprenol N-acetylglucosamine transferase">
    <location>
        <begin position="1"/>
        <end position="441"/>
    </location>
</feature>
<feature type="binding site" evidence="1">
    <location>
        <begin position="28"/>
        <end position="30"/>
    </location>
    <ligand>
        <name>UDP-N-acetyl-alpha-D-glucosamine</name>
        <dbReference type="ChEBI" id="CHEBI:57705"/>
    </ligand>
</feature>
<feature type="binding site" evidence="1">
    <location>
        <position position="140"/>
    </location>
    <ligand>
        <name>UDP-N-acetyl-alpha-D-glucosamine</name>
        <dbReference type="ChEBI" id="CHEBI:57705"/>
    </ligand>
</feature>
<feature type="binding site" evidence="1">
    <location>
        <position position="176"/>
    </location>
    <ligand>
        <name>UDP-N-acetyl-alpha-D-glucosamine</name>
        <dbReference type="ChEBI" id="CHEBI:57705"/>
    </ligand>
</feature>
<feature type="binding site" evidence="1">
    <location>
        <position position="204"/>
    </location>
    <ligand>
        <name>UDP-N-acetyl-alpha-D-glucosamine</name>
        <dbReference type="ChEBI" id="CHEBI:57705"/>
    </ligand>
</feature>
<feature type="binding site" evidence="1">
    <location>
        <position position="257"/>
    </location>
    <ligand>
        <name>UDP-N-acetyl-alpha-D-glucosamine</name>
        <dbReference type="ChEBI" id="CHEBI:57705"/>
    </ligand>
</feature>
<feature type="binding site" evidence="1">
    <location>
        <position position="302"/>
    </location>
    <ligand>
        <name>UDP-N-acetyl-alpha-D-glucosamine</name>
        <dbReference type="ChEBI" id="CHEBI:57705"/>
    </ligand>
</feature>
<organism>
    <name type="scientific">Xanthomonas oryzae pv. oryzae (strain MAFF 311018)</name>
    <dbReference type="NCBI Taxonomy" id="342109"/>
    <lineage>
        <taxon>Bacteria</taxon>
        <taxon>Pseudomonadati</taxon>
        <taxon>Pseudomonadota</taxon>
        <taxon>Gammaproteobacteria</taxon>
        <taxon>Lysobacterales</taxon>
        <taxon>Lysobacteraceae</taxon>
        <taxon>Xanthomonas</taxon>
    </lineage>
</organism>
<sequence length="441" mass="45770">MSVYAHLSQTPAHPSARIQPVMILAGGTGGHIFPGLAVAKVLSARGVPVTWLGADGAMETRLVPQHDIPIDTLAITGLRGKGMVKLLGAPLRVMRAVRAAGFVLRKRQPRAVISFGGFAAGPGGLAARLLGAPLLVHEQNRAPGMTNKVLSRFARRVLTGFPGSFAGEEAVGNPVRAEIAALPAPADRLVGRTGPVCVLVLGGSQGARVLNQAVPTALAALGHPDVEVRHQCGEKLRAEAEVAYAQASVNASVEPFIADMAAAYAWADLVVCRAGASTLAELCAAGVGSVLVPFAAAVDDHQTRNAEYLVGADAAVLLKQDDSLAVRLQQVLQTLLTDPARRLSMANAARTLAKPDAAERIADIILQEAGTGDRQPPAVEERAGFGIGKEQQHKQDSMQNSVDGQFSGRSTAAVANLQCRSLFDSHRLAILTPGTFAGGAA</sequence>
<keyword id="KW-0131">Cell cycle</keyword>
<keyword id="KW-0132">Cell division</keyword>
<keyword id="KW-0997">Cell inner membrane</keyword>
<keyword id="KW-1003">Cell membrane</keyword>
<keyword id="KW-0133">Cell shape</keyword>
<keyword id="KW-0961">Cell wall biogenesis/degradation</keyword>
<keyword id="KW-0328">Glycosyltransferase</keyword>
<keyword id="KW-0472">Membrane</keyword>
<keyword id="KW-0573">Peptidoglycan synthesis</keyword>
<keyword id="KW-0808">Transferase</keyword>
<proteinExistence type="inferred from homology"/>
<gene>
    <name evidence="1" type="primary">murG</name>
    <name type="ordered locus">XOO3604</name>
</gene>
<accession>Q2NZB8</accession>
<name>MURG_XANOM</name>
<evidence type="ECO:0000255" key="1">
    <source>
        <dbReference type="HAMAP-Rule" id="MF_00033"/>
    </source>
</evidence>
<reference key="1">
    <citation type="journal article" date="2005" name="Jpn. Agric. Res. Q.">
        <title>Genome sequence of Xanthomonas oryzae pv. oryzae suggests contribution of large numbers of effector genes and insertion sequences to its race diversity.</title>
        <authorList>
            <person name="Ochiai H."/>
            <person name="Inoue Y."/>
            <person name="Takeya M."/>
            <person name="Sasaki A."/>
            <person name="Kaku H."/>
        </authorList>
    </citation>
    <scope>NUCLEOTIDE SEQUENCE [LARGE SCALE GENOMIC DNA]</scope>
    <source>
        <strain>MAFF 311018</strain>
    </source>
</reference>
<dbReference type="EC" id="2.4.1.227" evidence="1"/>
<dbReference type="EMBL" id="AP008229">
    <property type="protein sequence ID" value="BAE70359.1"/>
    <property type="molecule type" value="Genomic_DNA"/>
</dbReference>
<dbReference type="SMR" id="Q2NZB8"/>
<dbReference type="CAZy" id="GT28">
    <property type="family name" value="Glycosyltransferase Family 28"/>
</dbReference>
<dbReference type="KEGG" id="xom:XOO3604"/>
<dbReference type="HOGENOM" id="CLU_037404_2_0_6"/>
<dbReference type="UniPathway" id="UPA00219"/>
<dbReference type="GO" id="GO:0005886">
    <property type="term" value="C:plasma membrane"/>
    <property type="evidence" value="ECO:0007669"/>
    <property type="project" value="UniProtKB-SubCell"/>
</dbReference>
<dbReference type="GO" id="GO:0051991">
    <property type="term" value="F:UDP-N-acetyl-D-glucosamine:N-acetylmuramoyl-L-alanyl-D-glutamyl-meso-2,6-diaminopimelyl-D-alanyl-D-alanine-diphosphoundecaprenol 4-beta-N-acetylglucosaminlytransferase activity"/>
    <property type="evidence" value="ECO:0007669"/>
    <property type="project" value="RHEA"/>
</dbReference>
<dbReference type="GO" id="GO:0050511">
    <property type="term" value="F:undecaprenyldiphospho-muramoylpentapeptide beta-N-acetylglucosaminyltransferase activity"/>
    <property type="evidence" value="ECO:0007669"/>
    <property type="project" value="UniProtKB-UniRule"/>
</dbReference>
<dbReference type="GO" id="GO:0005975">
    <property type="term" value="P:carbohydrate metabolic process"/>
    <property type="evidence" value="ECO:0007669"/>
    <property type="project" value="InterPro"/>
</dbReference>
<dbReference type="GO" id="GO:0051301">
    <property type="term" value="P:cell division"/>
    <property type="evidence" value="ECO:0007669"/>
    <property type="project" value="UniProtKB-KW"/>
</dbReference>
<dbReference type="GO" id="GO:0071555">
    <property type="term" value="P:cell wall organization"/>
    <property type="evidence" value="ECO:0007669"/>
    <property type="project" value="UniProtKB-KW"/>
</dbReference>
<dbReference type="GO" id="GO:0030259">
    <property type="term" value="P:lipid glycosylation"/>
    <property type="evidence" value="ECO:0007669"/>
    <property type="project" value="UniProtKB-UniRule"/>
</dbReference>
<dbReference type="GO" id="GO:0009252">
    <property type="term" value="P:peptidoglycan biosynthetic process"/>
    <property type="evidence" value="ECO:0007669"/>
    <property type="project" value="UniProtKB-UniRule"/>
</dbReference>
<dbReference type="GO" id="GO:0008360">
    <property type="term" value="P:regulation of cell shape"/>
    <property type="evidence" value="ECO:0007669"/>
    <property type="project" value="UniProtKB-KW"/>
</dbReference>
<dbReference type="CDD" id="cd03785">
    <property type="entry name" value="GT28_MurG"/>
    <property type="match status" value="1"/>
</dbReference>
<dbReference type="Gene3D" id="3.40.50.2000">
    <property type="entry name" value="Glycogen Phosphorylase B"/>
    <property type="match status" value="2"/>
</dbReference>
<dbReference type="HAMAP" id="MF_00033">
    <property type="entry name" value="MurG"/>
    <property type="match status" value="1"/>
</dbReference>
<dbReference type="InterPro" id="IPR006009">
    <property type="entry name" value="GlcNAc_MurG"/>
</dbReference>
<dbReference type="InterPro" id="IPR007235">
    <property type="entry name" value="Glyco_trans_28_C"/>
</dbReference>
<dbReference type="InterPro" id="IPR004276">
    <property type="entry name" value="GlycoTrans_28_N"/>
</dbReference>
<dbReference type="NCBIfam" id="TIGR01133">
    <property type="entry name" value="murG"/>
    <property type="match status" value="1"/>
</dbReference>
<dbReference type="PANTHER" id="PTHR21015:SF22">
    <property type="entry name" value="GLYCOSYLTRANSFERASE"/>
    <property type="match status" value="1"/>
</dbReference>
<dbReference type="PANTHER" id="PTHR21015">
    <property type="entry name" value="UDP-N-ACETYLGLUCOSAMINE--N-ACETYLMURAMYL-(PENTAPEPTIDE) PYROPHOSPHORYL-UNDECAPRENOL N-ACETYLGLUCOSAMINE TRANSFERASE 1"/>
    <property type="match status" value="1"/>
</dbReference>
<dbReference type="Pfam" id="PF04101">
    <property type="entry name" value="Glyco_tran_28_C"/>
    <property type="match status" value="1"/>
</dbReference>
<dbReference type="Pfam" id="PF03033">
    <property type="entry name" value="Glyco_transf_28"/>
    <property type="match status" value="1"/>
</dbReference>
<dbReference type="SUPFAM" id="SSF53756">
    <property type="entry name" value="UDP-Glycosyltransferase/glycogen phosphorylase"/>
    <property type="match status" value="1"/>
</dbReference>
<protein>
    <recommendedName>
        <fullName evidence="1">UDP-N-acetylglucosamine--N-acetylmuramyl-(pentapeptide) pyrophosphoryl-undecaprenol N-acetylglucosamine transferase</fullName>
        <ecNumber evidence="1">2.4.1.227</ecNumber>
    </recommendedName>
    <alternativeName>
        <fullName evidence="1">Undecaprenyl-PP-MurNAc-pentapeptide-UDPGlcNAc GlcNAc transferase</fullName>
    </alternativeName>
</protein>